<evidence type="ECO:0000255" key="1">
    <source>
        <dbReference type="HAMAP-Rule" id="MF_00059"/>
    </source>
</evidence>
<geneLocation type="chloroplast"/>
<protein>
    <recommendedName>
        <fullName evidence="1">DNA-directed RNA polymerase subunit alpha</fullName>
        <shortName evidence="1">PEP</shortName>
        <ecNumber evidence="1">2.7.7.6</ecNumber>
    </recommendedName>
    <alternativeName>
        <fullName evidence="1">Plastid-encoded RNA polymerase subunit alpha</fullName>
        <shortName evidence="1">RNA polymerase subunit alpha</shortName>
    </alternativeName>
</protein>
<comment type="function">
    <text evidence="1">DNA-dependent RNA polymerase catalyzes the transcription of DNA into RNA using the four ribonucleoside triphosphates as substrates.</text>
</comment>
<comment type="catalytic activity">
    <reaction evidence="1">
        <text>RNA(n) + a ribonucleoside 5'-triphosphate = RNA(n+1) + diphosphate</text>
        <dbReference type="Rhea" id="RHEA:21248"/>
        <dbReference type="Rhea" id="RHEA-COMP:14527"/>
        <dbReference type="Rhea" id="RHEA-COMP:17342"/>
        <dbReference type="ChEBI" id="CHEBI:33019"/>
        <dbReference type="ChEBI" id="CHEBI:61557"/>
        <dbReference type="ChEBI" id="CHEBI:140395"/>
        <dbReference type="EC" id="2.7.7.6"/>
    </reaction>
</comment>
<comment type="subunit">
    <text evidence="1">In plastids the minimal PEP RNA polymerase catalytic core is composed of four subunits: alpha, beta, beta', and beta''. When a (nuclear-encoded) sigma factor is associated with the core the holoenzyme is formed, which can initiate transcription.</text>
</comment>
<comment type="subcellular location">
    <subcellularLocation>
        <location>Plastid</location>
        <location>Chloroplast</location>
    </subcellularLocation>
</comment>
<comment type="domain">
    <text evidence="1">The N-terminal domain is essential for RNAP assembly and basal transcription, whereas the C-terminal domain is involved in interaction with transcriptional regulators and with upstream promoter elements.</text>
</comment>
<comment type="similarity">
    <text evidence="1">Belongs to the RNA polymerase alpha chain family.</text>
</comment>
<organism>
    <name type="scientific">Acorus gramineus</name>
    <name type="common">Dwarf sweet flag</name>
    <dbReference type="NCBI Taxonomy" id="55184"/>
    <lineage>
        <taxon>Eukaryota</taxon>
        <taxon>Viridiplantae</taxon>
        <taxon>Streptophyta</taxon>
        <taxon>Embryophyta</taxon>
        <taxon>Tracheophyta</taxon>
        <taxon>Spermatophyta</taxon>
        <taxon>Magnoliopsida</taxon>
        <taxon>Liliopsida</taxon>
        <taxon>Acoraceae</taxon>
        <taxon>Acorus</taxon>
    </lineage>
</organism>
<feature type="chain" id="PRO_0000175431" description="DNA-directed RNA polymerase subunit alpha">
    <location>
        <begin position="1"/>
        <end position="337"/>
    </location>
</feature>
<feature type="region of interest" description="Alpha N-terminal domain (alpha-NTD)" evidence="1">
    <location>
        <begin position="1"/>
        <end position="233"/>
    </location>
</feature>
<feature type="region of interest" description="Alpha C-terminal domain (alpha-CTD)" evidence="1">
    <location>
        <begin position="265"/>
        <end position="337"/>
    </location>
</feature>
<name>RPOA_ACOGR</name>
<dbReference type="EC" id="2.7.7.6" evidence="1"/>
<dbReference type="EMBL" id="AY757818">
    <property type="protein sequence ID" value="AAV74359.1"/>
    <property type="molecule type" value="Genomic_DNA"/>
</dbReference>
<dbReference type="SMR" id="Q5QA74"/>
<dbReference type="GO" id="GO:0009507">
    <property type="term" value="C:chloroplast"/>
    <property type="evidence" value="ECO:0007669"/>
    <property type="project" value="UniProtKB-SubCell"/>
</dbReference>
<dbReference type="GO" id="GO:0000428">
    <property type="term" value="C:DNA-directed RNA polymerase complex"/>
    <property type="evidence" value="ECO:0007669"/>
    <property type="project" value="UniProtKB-KW"/>
</dbReference>
<dbReference type="GO" id="GO:0005739">
    <property type="term" value="C:mitochondrion"/>
    <property type="evidence" value="ECO:0007669"/>
    <property type="project" value="GOC"/>
</dbReference>
<dbReference type="GO" id="GO:0003677">
    <property type="term" value="F:DNA binding"/>
    <property type="evidence" value="ECO:0007669"/>
    <property type="project" value="UniProtKB-UniRule"/>
</dbReference>
<dbReference type="GO" id="GO:0003899">
    <property type="term" value="F:DNA-directed RNA polymerase activity"/>
    <property type="evidence" value="ECO:0007669"/>
    <property type="project" value="UniProtKB-UniRule"/>
</dbReference>
<dbReference type="GO" id="GO:0046983">
    <property type="term" value="F:protein dimerization activity"/>
    <property type="evidence" value="ECO:0007669"/>
    <property type="project" value="InterPro"/>
</dbReference>
<dbReference type="GO" id="GO:0006351">
    <property type="term" value="P:DNA-templated transcription"/>
    <property type="evidence" value="ECO:0007669"/>
    <property type="project" value="UniProtKB-UniRule"/>
</dbReference>
<dbReference type="CDD" id="cd06928">
    <property type="entry name" value="RNAP_alpha_NTD"/>
    <property type="match status" value="1"/>
</dbReference>
<dbReference type="FunFam" id="1.10.150.20:FF:000021">
    <property type="entry name" value="DNA-directed RNA polymerase subunit alpha"/>
    <property type="match status" value="1"/>
</dbReference>
<dbReference type="FunFam" id="2.170.120.12:FF:000001">
    <property type="entry name" value="DNA-directed RNA polymerase subunit alpha"/>
    <property type="match status" value="1"/>
</dbReference>
<dbReference type="FunFam" id="3.30.1360.10:FF:000039">
    <property type="entry name" value="DNA-directed RNA polymerase subunit alpha"/>
    <property type="match status" value="1"/>
</dbReference>
<dbReference type="Gene3D" id="1.10.150.20">
    <property type="entry name" value="5' to 3' exonuclease, C-terminal subdomain"/>
    <property type="match status" value="1"/>
</dbReference>
<dbReference type="Gene3D" id="2.170.120.12">
    <property type="entry name" value="DNA-directed RNA polymerase, insert domain"/>
    <property type="match status" value="1"/>
</dbReference>
<dbReference type="Gene3D" id="3.30.1360.10">
    <property type="entry name" value="RNA polymerase, RBP11-like subunit"/>
    <property type="match status" value="1"/>
</dbReference>
<dbReference type="HAMAP" id="MF_00059">
    <property type="entry name" value="RNApol_bact_RpoA"/>
    <property type="match status" value="1"/>
</dbReference>
<dbReference type="InterPro" id="IPR011262">
    <property type="entry name" value="DNA-dir_RNA_pol_insert"/>
</dbReference>
<dbReference type="InterPro" id="IPR011263">
    <property type="entry name" value="DNA-dir_RNA_pol_RpoA/D/Rpb3"/>
</dbReference>
<dbReference type="InterPro" id="IPR011773">
    <property type="entry name" value="DNA-dir_RpoA"/>
</dbReference>
<dbReference type="InterPro" id="IPR036603">
    <property type="entry name" value="RBP11-like"/>
</dbReference>
<dbReference type="InterPro" id="IPR011260">
    <property type="entry name" value="RNAP_asu_C"/>
</dbReference>
<dbReference type="InterPro" id="IPR036643">
    <property type="entry name" value="RNApol_insert_sf"/>
</dbReference>
<dbReference type="NCBIfam" id="TIGR02027">
    <property type="entry name" value="rpoA"/>
    <property type="match status" value="1"/>
</dbReference>
<dbReference type="Pfam" id="PF01000">
    <property type="entry name" value="RNA_pol_A_bac"/>
    <property type="match status" value="1"/>
</dbReference>
<dbReference type="Pfam" id="PF03118">
    <property type="entry name" value="RNA_pol_A_CTD"/>
    <property type="match status" value="1"/>
</dbReference>
<dbReference type="Pfam" id="PF01193">
    <property type="entry name" value="RNA_pol_L"/>
    <property type="match status" value="1"/>
</dbReference>
<dbReference type="SMART" id="SM00662">
    <property type="entry name" value="RPOLD"/>
    <property type="match status" value="1"/>
</dbReference>
<dbReference type="SUPFAM" id="SSF47789">
    <property type="entry name" value="C-terminal domain of RNA polymerase alpha subunit"/>
    <property type="match status" value="1"/>
</dbReference>
<dbReference type="SUPFAM" id="SSF56553">
    <property type="entry name" value="Insert subdomain of RNA polymerase alpha subunit"/>
    <property type="match status" value="1"/>
</dbReference>
<dbReference type="SUPFAM" id="SSF55257">
    <property type="entry name" value="RBP11-like subunits of RNA polymerase"/>
    <property type="match status" value="1"/>
</dbReference>
<keyword id="KW-0150">Chloroplast</keyword>
<keyword id="KW-0240">DNA-directed RNA polymerase</keyword>
<keyword id="KW-0548">Nucleotidyltransferase</keyword>
<keyword id="KW-0934">Plastid</keyword>
<keyword id="KW-0804">Transcription</keyword>
<keyword id="KW-0808">Transferase</keyword>
<reference key="1">
    <citation type="journal article" date="2004" name="BMC Evol. Biol.">
        <title>Long branch attraction, taxon sampling, and the earliest angiosperms: Amborella or monocots?</title>
        <authorList>
            <person name="Stefanovic S."/>
            <person name="Rice D.W."/>
            <person name="Palmer J.D."/>
        </authorList>
    </citation>
    <scope>NUCLEOTIDE SEQUENCE [GENOMIC DNA]</scope>
</reference>
<accession>Q5QA74</accession>
<sequence>MVREEVVGSTRALQWKCVESRADSKRLYYGRFILSPLLKGQADTIGIAMRRALLGEIEGTCITRAKSEKVPHEYSTIAGIEESVHEILMNLKEIVLRSNLYGTRDASICVRGPRCVTAQDIISPPSVEVVDTTQHIASLTEPIDLCIGLQIQRDRGYRMKTTKNSQDGSYPIDAVSMPVRNANHSIHSYGNGNQKQEILFLEIWTNGSLTPKEALHEASRNLIDLFIPFLHAEEEDINFEENQNRFTVPPFTFPDRLANLKKNKKEIALKCIFIDQSELPPRTYNCLKRSNIHTLLDLLSNSQEDLMKIEYFRIEDVKQILDTLRKHFAIDLPKNKF</sequence>
<gene>
    <name evidence="1" type="primary">rpoA</name>
</gene>
<proteinExistence type="inferred from homology"/>